<accession>C8BKC7</accession>
<accession>Q1RPQ8</accession>
<accession>Q30DR1</accession>
<comment type="function">
    <text evidence="2 3">Adapter protein involved in the Toll-like receptor and IL-1 receptor signaling pathway in the innate immune response. Acts via IRAK1, IRAK2, IRF7 and TRAF6, leading to NF-kappa-B activation, cytokine secretion and the inflammatory response. Increases IL-8 transcription. Involved in IL-18-mediated signaling pathway. Activates IRF1 resulting in its rapid migration into the nucleus to mediate an efficient induction of IFN-beta, NOS2/INOS, and IL12A genes. Upon TLR8 activation by GU-rich single-stranded RNA (GU-rich RNA) derived from viruses, induces IL1B release through NLRP3 inflammasome activation (By similarity). MyD88-mediated signaling in intestinal epithelial cells is crucial for maintenance of gut homeostasis and controls the expression of the antimicrobial lectin REG3G in the small intestine (By similarity).</text>
</comment>
<comment type="subunit">
    <text evidence="3">Homodimer. Also forms heterodimers with TIRAP. Binds to TLR2, TLR4, IRAK1, IRAK2 and IRAK4 via their respective TIR domains. Interacts with IL18R1. Interacts with BMX, IL1RL1, IKBKE and IRF7. Interacts with LRRFIP1 and LRRFIP2; this interaction positively regulates Toll-like receptor (TLR) signaling in response to agonist. Interacts with FLII. LRRFIP1 and LRRFIP2 compete with FLII for MYD88-binding. Interacts with IRF1. Upon IL1B treatment, forms a complex with PELI1, IRAK1, IRAK4 and TRAF6; this complex recruits MAP3K7/TAK1, TAB1 and TAB2 to mediate NF-kappa-B activation. Direct binding of SMAD6 to PELI1 prevents the complex formation and hence negatively regulates IL1R-TLR signaling and eventually NF-kappa-B-mediated gene expression. May interact with PIK3AP1. Interacts (via TIR domain) with DHX9 (via H2A and OB-fold regions); this interaction is direct. Interacts with OTUD4 deubiquitinase; the interaction is direct.</text>
</comment>
<comment type="subcellular location">
    <subcellularLocation>
        <location evidence="3">Cytoplasm</location>
    </subcellularLocation>
    <subcellularLocation>
        <location evidence="3">Nucleus</location>
    </subcellularLocation>
</comment>
<comment type="tissue specificity">
    <text evidence="6">Detecetd in mesenteric lymph node, prescapular lymph node, lymphocytes, lung, kidney, skin and urinary bladder.</text>
</comment>
<comment type="domain">
    <text evidence="2">The intermediate domain (ID) is required for the phosphorylation and activation of IRAK.</text>
</comment>
<comment type="PTM">
    <text evidence="3">Ubiquitinated; undergoes 'Lys-63'-linked polyubiquitination. OTUD4 specifically hydrolyzes 'Lys-63'-linked polyubiquitinated MYD88. Deubiquitinated by USP3 that cleaves 'Lys-63'-linked ubiquitin chains leading to inhibition of MYD88-induced NF-kappa-B signaling.</text>
</comment>
<name>MYD88_SHEEP</name>
<feature type="chain" id="PRO_0000393139" description="Myeloid differentiation primary response protein MyD88">
    <location>
        <begin position="1"/>
        <end position="296"/>
    </location>
</feature>
<feature type="domain" description="Death" evidence="4">
    <location>
        <begin position="32"/>
        <end position="109"/>
    </location>
</feature>
<feature type="domain" description="TIR" evidence="5">
    <location>
        <begin position="159"/>
        <end position="293"/>
    </location>
</feature>
<feature type="region of interest" description="Intermediate domain" evidence="1">
    <location>
        <begin position="110"/>
        <end position="155"/>
    </location>
</feature>
<feature type="modified residue" description="Phosphoserine" evidence="3">
    <location>
        <position position="244"/>
    </location>
</feature>
<feature type="sequence conflict" description="In Ref. 1; ACV04826." evidence="7" ref="1">
    <original>R</original>
    <variation>K</variation>
    <location>
        <position position="73"/>
    </location>
</feature>
<feature type="sequence conflict" description="In Ref. 1; ACV04826." evidence="7" ref="1">
    <original>V</original>
    <variation>M</variation>
    <location>
        <position position="86"/>
    </location>
</feature>
<keyword id="KW-0963">Cytoplasm</keyword>
<keyword id="KW-0391">Immunity</keyword>
<keyword id="KW-0395">Inflammatory response</keyword>
<keyword id="KW-0399">Innate immunity</keyword>
<keyword id="KW-0539">Nucleus</keyword>
<keyword id="KW-0597">Phosphoprotein</keyword>
<keyword id="KW-1185">Reference proteome</keyword>
<keyword id="KW-0832">Ubl conjugation</keyword>
<sequence length="296" mass="33780">MTEGVPSAGSALPTPAMSSLPLAALNVRVRRRLSLFLNVRAPVAADWTVLAEAMDFEYLEIQQLEKYADPTSRLLDDWQRRPGASVGRLLELLAKLGREDVLMELGPSIEEDCQKYILKQQQEASEKPLQVDSIDSSIPRINDMAGITIRDDPLGQKPEYFDAFICYCPSDIEFVHEMIRQLEQTNYRLKLCVSDRDVLPGTCVWSIASELIEKRCRRMVVVVSDXYLQSKECDFQTKFALSLSPGAHQKRLIPIKYKPMKKEFPSILRFITVCDYTNPCTQNWFWTRLAKALSMP</sequence>
<organism>
    <name type="scientific">Ovis aries</name>
    <name type="common">Sheep</name>
    <dbReference type="NCBI Taxonomy" id="9940"/>
    <lineage>
        <taxon>Eukaryota</taxon>
        <taxon>Metazoa</taxon>
        <taxon>Chordata</taxon>
        <taxon>Craniata</taxon>
        <taxon>Vertebrata</taxon>
        <taxon>Euteleostomi</taxon>
        <taxon>Mammalia</taxon>
        <taxon>Eutheria</taxon>
        <taxon>Laurasiatheria</taxon>
        <taxon>Artiodactyla</taxon>
        <taxon>Ruminantia</taxon>
        <taxon>Pecora</taxon>
        <taxon>Bovidae</taxon>
        <taxon>Caprinae</taxon>
        <taxon>Ovis</taxon>
    </lineage>
</organism>
<reference key="1">
    <citation type="submission" date="2009-05" db="EMBL/GenBank/DDBJ databases">
        <authorList>
            <person name="Liu G.Y."/>
        </authorList>
    </citation>
    <scope>NUCLEOTIDE SEQUENCE [LARGE SCALE MRNA]</scope>
</reference>
<reference key="2">
    <citation type="journal article" date="2007" name="Vet. Immunol. Immunopathol.">
        <title>Differential expression of pattern recognition receptors in sheep tissues and leukocyte subsets.</title>
        <authorList>
            <person name="Nalubamba K.S."/>
            <person name="Gossner A.G."/>
            <person name="Dalziel R.G."/>
            <person name="Hopkins J."/>
        </authorList>
    </citation>
    <scope>NUCLEOTIDE SEQUENCE [MRNA] OF 33-191</scope>
    <scope>TISSUE SPECIFICITY</scope>
    <source>
        <tissue>Ileum</tissue>
    </source>
</reference>
<reference key="3">
    <citation type="journal article" date="2006" name="Anim. Genet.">
        <title>Sequence diversity and rates of molecular evolution between sheep and cattle genes.</title>
        <authorList>
            <person name="Kijas J.W."/>
            <person name="Menzies M."/>
            <person name="Ingham A."/>
        </authorList>
    </citation>
    <scope>NUCLEOTIDE SEQUENCE [MRNA] OF 228-296</scope>
</reference>
<dbReference type="EMBL" id="GQ221044">
    <property type="protein sequence ID" value="ACV04826.1"/>
    <property type="molecule type" value="mRNA"/>
</dbReference>
<dbReference type="EMBL" id="AM117196">
    <property type="protein sequence ID" value="CAJ90518.1"/>
    <property type="molecule type" value="mRNA"/>
</dbReference>
<dbReference type="EMBL" id="DQ152979">
    <property type="protein sequence ID" value="ABB02312.1"/>
    <property type="molecule type" value="mRNA"/>
</dbReference>
<dbReference type="RefSeq" id="NP_001159655.1">
    <property type="nucleotide sequence ID" value="NM_001166183.1"/>
</dbReference>
<dbReference type="STRING" id="9940.ENSOARP00000001070"/>
<dbReference type="PaxDb" id="9940-ENSOARP00000001070"/>
<dbReference type="GeneID" id="678682"/>
<dbReference type="KEGG" id="oas:678682"/>
<dbReference type="CTD" id="4615"/>
<dbReference type="eggNOG" id="ENOG502QWKI">
    <property type="taxonomic scope" value="Eukaryota"/>
</dbReference>
<dbReference type="OrthoDB" id="10037120at2759"/>
<dbReference type="Proteomes" id="UP000002356">
    <property type="component" value="Unplaced"/>
</dbReference>
<dbReference type="GO" id="GO:0005737">
    <property type="term" value="C:cytoplasm"/>
    <property type="evidence" value="ECO:0007669"/>
    <property type="project" value="UniProtKB-SubCell"/>
</dbReference>
<dbReference type="GO" id="GO:0005634">
    <property type="term" value="C:nucleus"/>
    <property type="evidence" value="ECO:0007669"/>
    <property type="project" value="UniProtKB-SubCell"/>
</dbReference>
<dbReference type="GO" id="GO:0005886">
    <property type="term" value="C:plasma membrane"/>
    <property type="evidence" value="ECO:0007669"/>
    <property type="project" value="TreeGrafter"/>
</dbReference>
<dbReference type="GO" id="GO:0070976">
    <property type="term" value="F:TIR domain binding"/>
    <property type="evidence" value="ECO:0007669"/>
    <property type="project" value="InterPro"/>
</dbReference>
<dbReference type="GO" id="GO:0035325">
    <property type="term" value="F:Toll-like receptor binding"/>
    <property type="evidence" value="ECO:0007669"/>
    <property type="project" value="TreeGrafter"/>
</dbReference>
<dbReference type="GO" id="GO:0050830">
    <property type="term" value="P:defense response to Gram-positive bacterium"/>
    <property type="evidence" value="ECO:0000250"/>
    <property type="project" value="UniProtKB"/>
</dbReference>
<dbReference type="GO" id="GO:0051607">
    <property type="term" value="P:defense response to virus"/>
    <property type="evidence" value="ECO:0000250"/>
    <property type="project" value="UniProtKB"/>
</dbReference>
<dbReference type="GO" id="GO:0006954">
    <property type="term" value="P:inflammatory response"/>
    <property type="evidence" value="ECO:0007669"/>
    <property type="project" value="UniProtKB-KW"/>
</dbReference>
<dbReference type="GO" id="GO:0045087">
    <property type="term" value="P:innate immune response"/>
    <property type="evidence" value="ECO:0007669"/>
    <property type="project" value="UniProtKB-KW"/>
</dbReference>
<dbReference type="GO" id="GO:0002755">
    <property type="term" value="P:MyD88-dependent toll-like receptor signaling pathway"/>
    <property type="evidence" value="ECO:0007669"/>
    <property type="project" value="InterPro"/>
</dbReference>
<dbReference type="GO" id="GO:0043123">
    <property type="term" value="P:positive regulation of canonical NF-kappaB signal transduction"/>
    <property type="evidence" value="ECO:0007669"/>
    <property type="project" value="InterPro"/>
</dbReference>
<dbReference type="GO" id="GO:0032731">
    <property type="term" value="P:positive regulation of interleukin-1 beta production"/>
    <property type="evidence" value="ECO:0000250"/>
    <property type="project" value="UniProtKB"/>
</dbReference>
<dbReference type="GO" id="GO:1900227">
    <property type="term" value="P:positive regulation of NLRP3 inflammasome complex assembly"/>
    <property type="evidence" value="ECO:0000250"/>
    <property type="project" value="UniProtKB"/>
</dbReference>
<dbReference type="GO" id="GO:0008063">
    <property type="term" value="P:Toll signaling pathway"/>
    <property type="evidence" value="ECO:0007669"/>
    <property type="project" value="TreeGrafter"/>
</dbReference>
<dbReference type="GO" id="GO:0034142">
    <property type="term" value="P:toll-like receptor 4 signaling pathway"/>
    <property type="evidence" value="ECO:0007669"/>
    <property type="project" value="TreeGrafter"/>
</dbReference>
<dbReference type="GO" id="GO:0034158">
    <property type="term" value="P:toll-like receptor 8 signaling pathway"/>
    <property type="evidence" value="ECO:0000250"/>
    <property type="project" value="UniProtKB"/>
</dbReference>
<dbReference type="CDD" id="cd08312">
    <property type="entry name" value="Death_MyD88"/>
    <property type="match status" value="1"/>
</dbReference>
<dbReference type="FunFam" id="1.10.533.10:FF:000029">
    <property type="entry name" value="Myeloid differentiation primary response protein MyD88"/>
    <property type="match status" value="1"/>
</dbReference>
<dbReference type="FunFam" id="3.40.50.10140:FF:000005">
    <property type="entry name" value="Myeloid differentiation primary response protein MyD88"/>
    <property type="match status" value="1"/>
</dbReference>
<dbReference type="Gene3D" id="1.10.533.10">
    <property type="entry name" value="Death Domain, Fas"/>
    <property type="match status" value="1"/>
</dbReference>
<dbReference type="Gene3D" id="3.40.50.10140">
    <property type="entry name" value="Toll/interleukin-1 receptor homology (TIR) domain"/>
    <property type="match status" value="1"/>
</dbReference>
<dbReference type="InterPro" id="IPR011029">
    <property type="entry name" value="DEATH-like_dom_sf"/>
</dbReference>
<dbReference type="InterPro" id="IPR000488">
    <property type="entry name" value="Death_dom"/>
</dbReference>
<dbReference type="InterPro" id="IPR034249">
    <property type="entry name" value="MyD88_Death"/>
</dbReference>
<dbReference type="InterPro" id="IPR017281">
    <property type="entry name" value="Myelin_different_resp_MyD88"/>
</dbReference>
<dbReference type="InterPro" id="IPR000157">
    <property type="entry name" value="TIR_dom"/>
</dbReference>
<dbReference type="InterPro" id="IPR035897">
    <property type="entry name" value="Toll_tir_struct_dom_sf"/>
</dbReference>
<dbReference type="PANTHER" id="PTHR15079">
    <property type="entry name" value="MYD88"/>
    <property type="match status" value="1"/>
</dbReference>
<dbReference type="PANTHER" id="PTHR15079:SF3">
    <property type="entry name" value="MYELOID DIFFERENTIATION PRIMARY RESPONSE PROTEIN MYD88"/>
    <property type="match status" value="1"/>
</dbReference>
<dbReference type="Pfam" id="PF00531">
    <property type="entry name" value="Death"/>
    <property type="match status" value="1"/>
</dbReference>
<dbReference type="Pfam" id="PF13676">
    <property type="entry name" value="TIR_2"/>
    <property type="match status" value="1"/>
</dbReference>
<dbReference type="PIRSF" id="PIRSF037756">
    <property type="entry name" value="MyD88"/>
    <property type="match status" value="1"/>
</dbReference>
<dbReference type="SMART" id="SM00005">
    <property type="entry name" value="DEATH"/>
    <property type="match status" value="1"/>
</dbReference>
<dbReference type="SMART" id="SM00255">
    <property type="entry name" value="TIR"/>
    <property type="match status" value="1"/>
</dbReference>
<dbReference type="SUPFAM" id="SSF47986">
    <property type="entry name" value="DEATH domain"/>
    <property type="match status" value="1"/>
</dbReference>
<dbReference type="SUPFAM" id="SSF52200">
    <property type="entry name" value="Toll/Interleukin receptor TIR domain"/>
    <property type="match status" value="1"/>
</dbReference>
<dbReference type="PROSITE" id="PS50017">
    <property type="entry name" value="DEATH_DOMAIN"/>
    <property type="match status" value="1"/>
</dbReference>
<dbReference type="PROSITE" id="PS50104">
    <property type="entry name" value="TIR"/>
    <property type="match status" value="1"/>
</dbReference>
<gene>
    <name type="primary">MYD88</name>
</gene>
<proteinExistence type="evidence at transcript level"/>
<protein>
    <recommendedName>
        <fullName>Myeloid differentiation primary response protein MyD88</fullName>
    </recommendedName>
</protein>
<evidence type="ECO:0000250" key="1"/>
<evidence type="ECO:0000250" key="2">
    <source>
        <dbReference type="UniProtKB" id="P22366"/>
    </source>
</evidence>
<evidence type="ECO:0000250" key="3">
    <source>
        <dbReference type="UniProtKB" id="Q99836"/>
    </source>
</evidence>
<evidence type="ECO:0000255" key="4">
    <source>
        <dbReference type="PROSITE-ProRule" id="PRU00064"/>
    </source>
</evidence>
<evidence type="ECO:0000255" key="5">
    <source>
        <dbReference type="PROSITE-ProRule" id="PRU00204"/>
    </source>
</evidence>
<evidence type="ECO:0000269" key="6">
    <source>
    </source>
</evidence>
<evidence type="ECO:0000305" key="7"/>